<gene>
    <name evidence="1" type="primary">rplK</name>
    <name type="ordered locus">Veis_2260</name>
</gene>
<organism>
    <name type="scientific">Verminephrobacter eiseniae (strain EF01-2)</name>
    <dbReference type="NCBI Taxonomy" id="391735"/>
    <lineage>
        <taxon>Bacteria</taxon>
        <taxon>Pseudomonadati</taxon>
        <taxon>Pseudomonadota</taxon>
        <taxon>Betaproteobacteria</taxon>
        <taxon>Burkholderiales</taxon>
        <taxon>Comamonadaceae</taxon>
        <taxon>Verminephrobacter</taxon>
    </lineage>
</organism>
<keyword id="KW-0488">Methylation</keyword>
<keyword id="KW-1185">Reference proteome</keyword>
<keyword id="KW-0687">Ribonucleoprotein</keyword>
<keyword id="KW-0689">Ribosomal protein</keyword>
<keyword id="KW-0694">RNA-binding</keyword>
<keyword id="KW-0699">rRNA-binding</keyword>
<reference key="1">
    <citation type="submission" date="2006-12" db="EMBL/GenBank/DDBJ databases">
        <title>Complete sequence of chromosome 1 of Verminephrobacter eiseniae EF01-2.</title>
        <authorList>
            <person name="Copeland A."/>
            <person name="Lucas S."/>
            <person name="Lapidus A."/>
            <person name="Barry K."/>
            <person name="Detter J.C."/>
            <person name="Glavina del Rio T."/>
            <person name="Dalin E."/>
            <person name="Tice H."/>
            <person name="Pitluck S."/>
            <person name="Chertkov O."/>
            <person name="Brettin T."/>
            <person name="Bruce D."/>
            <person name="Han C."/>
            <person name="Tapia R."/>
            <person name="Gilna P."/>
            <person name="Schmutz J."/>
            <person name="Larimer F."/>
            <person name="Land M."/>
            <person name="Hauser L."/>
            <person name="Kyrpides N."/>
            <person name="Kim E."/>
            <person name="Stahl D."/>
            <person name="Richardson P."/>
        </authorList>
    </citation>
    <scope>NUCLEOTIDE SEQUENCE [LARGE SCALE GENOMIC DNA]</scope>
    <source>
        <strain>EF01-2</strain>
    </source>
</reference>
<protein>
    <recommendedName>
        <fullName evidence="1">Large ribosomal subunit protein uL11</fullName>
    </recommendedName>
    <alternativeName>
        <fullName evidence="2">50S ribosomal protein L11</fullName>
    </alternativeName>
</protein>
<accession>A1WK51</accession>
<feature type="chain" id="PRO_1000046290" description="Large ribosomal subunit protein uL11">
    <location>
        <begin position="1"/>
        <end position="143"/>
    </location>
</feature>
<comment type="function">
    <text evidence="1">Forms part of the ribosomal stalk which helps the ribosome interact with GTP-bound translation factors.</text>
</comment>
<comment type="subunit">
    <text evidence="1">Part of the ribosomal stalk of the 50S ribosomal subunit. Interacts with L10 and the large rRNA to form the base of the stalk. L10 forms an elongated spine to which L12 dimers bind in a sequential fashion forming a multimeric L10(L12)X complex.</text>
</comment>
<comment type="PTM">
    <text evidence="1">One or more lysine residues are methylated.</text>
</comment>
<comment type="similarity">
    <text evidence="1">Belongs to the universal ribosomal protein uL11 family.</text>
</comment>
<proteinExistence type="inferred from homology"/>
<sequence>MAKKIVGFIKLQVPAGKANPSPPIGPALGQRGLNIMEFCKAFNAQTQGVEPGLPLPVVITAFADKSFTFIIKTPPATTLIKKAIKLEKGSASALSTKVGKITRAQLEEIAKTKMKDMNAANVDAAVRTLAGSARSMGVTVEGL</sequence>
<name>RL11_VEREI</name>
<evidence type="ECO:0000255" key="1">
    <source>
        <dbReference type="HAMAP-Rule" id="MF_00736"/>
    </source>
</evidence>
<evidence type="ECO:0000305" key="2"/>
<dbReference type="EMBL" id="CP000542">
    <property type="protein sequence ID" value="ABM58008.1"/>
    <property type="molecule type" value="Genomic_DNA"/>
</dbReference>
<dbReference type="RefSeq" id="WP_011810011.1">
    <property type="nucleotide sequence ID" value="NC_008786.1"/>
</dbReference>
<dbReference type="SMR" id="A1WK51"/>
<dbReference type="STRING" id="391735.Veis_2260"/>
<dbReference type="GeneID" id="76460823"/>
<dbReference type="KEGG" id="vei:Veis_2260"/>
<dbReference type="eggNOG" id="COG0080">
    <property type="taxonomic scope" value="Bacteria"/>
</dbReference>
<dbReference type="HOGENOM" id="CLU_074237_2_1_4"/>
<dbReference type="OrthoDB" id="9802408at2"/>
<dbReference type="Proteomes" id="UP000000374">
    <property type="component" value="Chromosome"/>
</dbReference>
<dbReference type="GO" id="GO:0022625">
    <property type="term" value="C:cytosolic large ribosomal subunit"/>
    <property type="evidence" value="ECO:0007669"/>
    <property type="project" value="TreeGrafter"/>
</dbReference>
<dbReference type="GO" id="GO:0070180">
    <property type="term" value="F:large ribosomal subunit rRNA binding"/>
    <property type="evidence" value="ECO:0007669"/>
    <property type="project" value="UniProtKB-UniRule"/>
</dbReference>
<dbReference type="GO" id="GO:0003735">
    <property type="term" value="F:structural constituent of ribosome"/>
    <property type="evidence" value="ECO:0007669"/>
    <property type="project" value="InterPro"/>
</dbReference>
<dbReference type="GO" id="GO:0006412">
    <property type="term" value="P:translation"/>
    <property type="evidence" value="ECO:0007669"/>
    <property type="project" value="UniProtKB-UniRule"/>
</dbReference>
<dbReference type="CDD" id="cd00349">
    <property type="entry name" value="Ribosomal_L11"/>
    <property type="match status" value="1"/>
</dbReference>
<dbReference type="FunFam" id="1.10.10.250:FF:000001">
    <property type="entry name" value="50S ribosomal protein L11"/>
    <property type="match status" value="1"/>
</dbReference>
<dbReference type="FunFam" id="3.30.1550.10:FF:000001">
    <property type="entry name" value="50S ribosomal protein L11"/>
    <property type="match status" value="1"/>
</dbReference>
<dbReference type="Gene3D" id="1.10.10.250">
    <property type="entry name" value="Ribosomal protein L11, C-terminal domain"/>
    <property type="match status" value="1"/>
</dbReference>
<dbReference type="Gene3D" id="3.30.1550.10">
    <property type="entry name" value="Ribosomal protein L11/L12, N-terminal domain"/>
    <property type="match status" value="1"/>
</dbReference>
<dbReference type="HAMAP" id="MF_00736">
    <property type="entry name" value="Ribosomal_uL11"/>
    <property type="match status" value="1"/>
</dbReference>
<dbReference type="InterPro" id="IPR000911">
    <property type="entry name" value="Ribosomal_uL11"/>
</dbReference>
<dbReference type="InterPro" id="IPR006519">
    <property type="entry name" value="Ribosomal_uL11_bac-typ"/>
</dbReference>
<dbReference type="InterPro" id="IPR020783">
    <property type="entry name" value="Ribosomal_uL11_C"/>
</dbReference>
<dbReference type="InterPro" id="IPR036769">
    <property type="entry name" value="Ribosomal_uL11_C_sf"/>
</dbReference>
<dbReference type="InterPro" id="IPR020785">
    <property type="entry name" value="Ribosomal_uL11_CS"/>
</dbReference>
<dbReference type="InterPro" id="IPR020784">
    <property type="entry name" value="Ribosomal_uL11_N"/>
</dbReference>
<dbReference type="InterPro" id="IPR036796">
    <property type="entry name" value="Ribosomal_uL11_N_sf"/>
</dbReference>
<dbReference type="NCBIfam" id="TIGR01632">
    <property type="entry name" value="L11_bact"/>
    <property type="match status" value="1"/>
</dbReference>
<dbReference type="PANTHER" id="PTHR11661">
    <property type="entry name" value="60S RIBOSOMAL PROTEIN L12"/>
    <property type="match status" value="1"/>
</dbReference>
<dbReference type="PANTHER" id="PTHR11661:SF1">
    <property type="entry name" value="LARGE RIBOSOMAL SUBUNIT PROTEIN UL11M"/>
    <property type="match status" value="1"/>
</dbReference>
<dbReference type="Pfam" id="PF00298">
    <property type="entry name" value="Ribosomal_L11"/>
    <property type="match status" value="1"/>
</dbReference>
<dbReference type="Pfam" id="PF03946">
    <property type="entry name" value="Ribosomal_L11_N"/>
    <property type="match status" value="1"/>
</dbReference>
<dbReference type="SMART" id="SM00649">
    <property type="entry name" value="RL11"/>
    <property type="match status" value="1"/>
</dbReference>
<dbReference type="SUPFAM" id="SSF54747">
    <property type="entry name" value="Ribosomal L11/L12e N-terminal domain"/>
    <property type="match status" value="1"/>
</dbReference>
<dbReference type="SUPFAM" id="SSF46906">
    <property type="entry name" value="Ribosomal protein L11, C-terminal domain"/>
    <property type="match status" value="1"/>
</dbReference>
<dbReference type="PROSITE" id="PS00359">
    <property type="entry name" value="RIBOSOMAL_L11"/>
    <property type="match status" value="1"/>
</dbReference>